<dbReference type="EMBL" id="CP001393">
    <property type="protein sequence ID" value="ACM60251.1"/>
    <property type="molecule type" value="Genomic_DNA"/>
</dbReference>
<dbReference type="RefSeq" id="WP_015907649.1">
    <property type="nucleotide sequence ID" value="NC_012034.1"/>
</dbReference>
<dbReference type="STRING" id="521460.Athe_1150"/>
<dbReference type="GeneID" id="31772499"/>
<dbReference type="KEGG" id="ate:Athe_1150"/>
<dbReference type="eggNOG" id="COG3906">
    <property type="taxonomic scope" value="Bacteria"/>
</dbReference>
<dbReference type="HOGENOM" id="CLU_146610_8_1_9"/>
<dbReference type="Proteomes" id="UP000007723">
    <property type="component" value="Chromosome"/>
</dbReference>
<dbReference type="HAMAP" id="MF_01448">
    <property type="entry name" value="UPF0473"/>
    <property type="match status" value="1"/>
</dbReference>
<dbReference type="InterPro" id="IPR009711">
    <property type="entry name" value="UPF0473"/>
</dbReference>
<dbReference type="Pfam" id="PF06949">
    <property type="entry name" value="DUF1292"/>
    <property type="match status" value="1"/>
</dbReference>
<sequence>MDMFADNVVTLVDEEGREISFEMLDRVNYNGNDYIVLLPLEEMEKEDEEAEVVILRIEDRDGEEVYVGVEDEEELENVFEIFQSRFDDEDFDMYDDDEE</sequence>
<gene>
    <name type="ordered locus">Athe_1150</name>
</gene>
<feature type="chain" id="PRO_1000184994" description="UPF0473 protein Athe_1150">
    <location>
        <begin position="1"/>
        <end position="99"/>
    </location>
</feature>
<comment type="similarity">
    <text evidence="1">Belongs to the UPF0473 family.</text>
</comment>
<proteinExistence type="inferred from homology"/>
<name>Y1150_CALBD</name>
<organism>
    <name type="scientific">Caldicellulosiruptor bescii (strain ATCC BAA-1888 / DSM 6725 / KCTC 15123 / Z-1320)</name>
    <name type="common">Anaerocellum thermophilum</name>
    <dbReference type="NCBI Taxonomy" id="521460"/>
    <lineage>
        <taxon>Bacteria</taxon>
        <taxon>Bacillati</taxon>
        <taxon>Bacillota</taxon>
        <taxon>Bacillota incertae sedis</taxon>
        <taxon>Caldicellulosiruptorales</taxon>
        <taxon>Caldicellulosiruptoraceae</taxon>
        <taxon>Caldicellulosiruptor</taxon>
    </lineage>
</organism>
<accession>B9MRE7</accession>
<protein>
    <recommendedName>
        <fullName evidence="1">UPF0473 protein Athe_1150</fullName>
    </recommendedName>
</protein>
<evidence type="ECO:0000255" key="1">
    <source>
        <dbReference type="HAMAP-Rule" id="MF_01448"/>
    </source>
</evidence>
<reference key="1">
    <citation type="submission" date="2009-01" db="EMBL/GenBank/DDBJ databases">
        <title>Complete sequence of chromosome of Caldicellulosiruptor becscii DSM 6725.</title>
        <authorList>
            <person name="Lucas S."/>
            <person name="Copeland A."/>
            <person name="Lapidus A."/>
            <person name="Glavina del Rio T."/>
            <person name="Tice H."/>
            <person name="Bruce D."/>
            <person name="Goodwin L."/>
            <person name="Pitluck S."/>
            <person name="Sims D."/>
            <person name="Meincke L."/>
            <person name="Brettin T."/>
            <person name="Detter J.C."/>
            <person name="Han C."/>
            <person name="Larimer F."/>
            <person name="Land M."/>
            <person name="Hauser L."/>
            <person name="Kyrpides N."/>
            <person name="Ovchinnikova G."/>
            <person name="Kataeva I."/>
            <person name="Adams M.W.W."/>
        </authorList>
    </citation>
    <scope>NUCLEOTIDE SEQUENCE [LARGE SCALE GENOMIC DNA]</scope>
    <source>
        <strain>ATCC BAA-1888 / DSM 6725 / KCTC 15123 / Z-1320</strain>
    </source>
</reference>